<sequence length="346" mass="37650">MIQFHIEAPDKGLEAALQDKIDNLTKPKGSLGTLEALALQVGLIQQTLSPVLRHPVNVIYASDHGIADEGVSKSPKEVTRQVIHNFLNGGAGVCYLARQHGFELKIVDGGVDFDFPVIPQLIDRKVRKGGTRNFLHEAAMTVEEMEKALQYGADIVTDCYNEGCNVISFGEMGIGNTAASSMWMTCLTQIPLIDCVGAGSGLDSEGVRHKYNVLKRSLENYKGDGSALDVMRYFGGYEMVMAVGGMLRAAELKMIILVDGFIMTNCVLVASRLYPEMQSYCVFGHCGDEAGHKRVLDFLGAKALLDLGLRLGEGSGSVCAYPILDSAVRMINEMHSFKQAAITKYF</sequence>
<accession>A6LIW6</accession>
<protein>
    <recommendedName>
        <fullName evidence="1">Nicotinate-nucleotide--dimethylbenzimidazole phosphoribosyltransferase</fullName>
        <shortName evidence="1">NN:DBI PRT</shortName>
        <ecNumber evidence="1">2.4.2.21</ecNumber>
    </recommendedName>
    <alternativeName>
        <fullName evidence="1">N(1)-alpha-phosphoribosyltransferase</fullName>
    </alternativeName>
</protein>
<evidence type="ECO:0000255" key="1">
    <source>
        <dbReference type="HAMAP-Rule" id="MF_00230"/>
    </source>
</evidence>
<gene>
    <name evidence="1" type="primary">cobT</name>
    <name type="ordered locus">BDI_3956</name>
</gene>
<reference key="1">
    <citation type="journal article" date="2007" name="PLoS Biol.">
        <title>Evolution of symbiotic bacteria in the distal human intestine.</title>
        <authorList>
            <person name="Xu J."/>
            <person name="Mahowald M.A."/>
            <person name="Ley R.E."/>
            <person name="Lozupone C.A."/>
            <person name="Hamady M."/>
            <person name="Martens E.C."/>
            <person name="Henrissat B."/>
            <person name="Coutinho P.M."/>
            <person name="Minx P."/>
            <person name="Latreille P."/>
            <person name="Cordum H."/>
            <person name="Van Brunt A."/>
            <person name="Kim K."/>
            <person name="Fulton R.S."/>
            <person name="Fulton L.A."/>
            <person name="Clifton S.W."/>
            <person name="Wilson R.K."/>
            <person name="Knight R.D."/>
            <person name="Gordon J.I."/>
        </authorList>
    </citation>
    <scope>NUCLEOTIDE SEQUENCE [LARGE SCALE GENOMIC DNA]</scope>
    <source>
        <strain>ATCC 8503 / DSM 20701 / CIP 104284 / JCM 5825 / NCTC 11152</strain>
    </source>
</reference>
<comment type="function">
    <text evidence="1">Catalyzes the synthesis of alpha-ribazole-5'-phosphate from nicotinate mononucleotide (NAMN) and 5,6-dimethylbenzimidazole (DMB).</text>
</comment>
<comment type="catalytic activity">
    <reaction evidence="1">
        <text>5,6-dimethylbenzimidazole + nicotinate beta-D-ribonucleotide = alpha-ribazole 5'-phosphate + nicotinate + H(+)</text>
        <dbReference type="Rhea" id="RHEA:11196"/>
        <dbReference type="ChEBI" id="CHEBI:15378"/>
        <dbReference type="ChEBI" id="CHEBI:15890"/>
        <dbReference type="ChEBI" id="CHEBI:32544"/>
        <dbReference type="ChEBI" id="CHEBI:57502"/>
        <dbReference type="ChEBI" id="CHEBI:57918"/>
        <dbReference type="EC" id="2.4.2.21"/>
    </reaction>
</comment>
<comment type="pathway">
    <text evidence="1">Nucleoside biosynthesis; alpha-ribazole biosynthesis; alpha-ribazole from 5,6-dimethylbenzimidazole: step 1/2.</text>
</comment>
<comment type="similarity">
    <text evidence="1">Belongs to the CobT family.</text>
</comment>
<name>COBT_PARD8</name>
<proteinExistence type="inferred from homology"/>
<feature type="chain" id="PRO_1000021608" description="Nicotinate-nucleotide--dimethylbenzimidazole phosphoribosyltransferase">
    <location>
        <begin position="1"/>
        <end position="346"/>
    </location>
</feature>
<feature type="active site" description="Proton acceptor" evidence="1">
    <location>
        <position position="313"/>
    </location>
</feature>
<dbReference type="EC" id="2.4.2.21" evidence="1"/>
<dbReference type="EMBL" id="CP000140">
    <property type="protein sequence ID" value="ABR45630.1"/>
    <property type="molecule type" value="Genomic_DNA"/>
</dbReference>
<dbReference type="RefSeq" id="WP_005865457.1">
    <property type="nucleotide sequence ID" value="NZ_LR215978.1"/>
</dbReference>
<dbReference type="SMR" id="A6LIW6"/>
<dbReference type="STRING" id="435591.BDI_3956"/>
<dbReference type="PaxDb" id="435591-BDI_3956"/>
<dbReference type="KEGG" id="pdi:BDI_3956"/>
<dbReference type="eggNOG" id="COG2038">
    <property type="taxonomic scope" value="Bacteria"/>
</dbReference>
<dbReference type="HOGENOM" id="CLU_002982_0_0_10"/>
<dbReference type="BioCyc" id="PDIS435591:G1G5A-4067-MONOMER"/>
<dbReference type="UniPathway" id="UPA00061">
    <property type="reaction ID" value="UER00516"/>
</dbReference>
<dbReference type="Proteomes" id="UP000000566">
    <property type="component" value="Chromosome"/>
</dbReference>
<dbReference type="GO" id="GO:0008939">
    <property type="term" value="F:nicotinate-nucleotide-dimethylbenzimidazole phosphoribosyltransferase activity"/>
    <property type="evidence" value="ECO:0007669"/>
    <property type="project" value="UniProtKB-UniRule"/>
</dbReference>
<dbReference type="GO" id="GO:0009236">
    <property type="term" value="P:cobalamin biosynthetic process"/>
    <property type="evidence" value="ECO:0007669"/>
    <property type="project" value="UniProtKB-KW"/>
</dbReference>
<dbReference type="CDD" id="cd02439">
    <property type="entry name" value="DMB-PRT_CobT"/>
    <property type="match status" value="1"/>
</dbReference>
<dbReference type="FunFam" id="3.40.50.10210:FF:000001">
    <property type="entry name" value="Nicotinate-nucleotide--dimethylbenzimidazole phosphoribosyltransferase"/>
    <property type="match status" value="1"/>
</dbReference>
<dbReference type="Gene3D" id="1.10.1610.10">
    <property type="match status" value="1"/>
</dbReference>
<dbReference type="Gene3D" id="3.40.50.10210">
    <property type="match status" value="1"/>
</dbReference>
<dbReference type="HAMAP" id="MF_00230">
    <property type="entry name" value="CobT"/>
    <property type="match status" value="1"/>
</dbReference>
<dbReference type="InterPro" id="IPR003200">
    <property type="entry name" value="Nict_dMeBzImd_PRibTrfase"/>
</dbReference>
<dbReference type="InterPro" id="IPR017846">
    <property type="entry name" value="Nict_dMeBzImd_PRibTrfase_bact"/>
</dbReference>
<dbReference type="InterPro" id="IPR023195">
    <property type="entry name" value="Nict_dMeBzImd_PRibTrfase_N"/>
</dbReference>
<dbReference type="InterPro" id="IPR036087">
    <property type="entry name" value="Nict_dMeBzImd_PRibTrfase_sf"/>
</dbReference>
<dbReference type="NCBIfam" id="TIGR03160">
    <property type="entry name" value="cobT_DBIPRT"/>
    <property type="match status" value="1"/>
</dbReference>
<dbReference type="NCBIfam" id="NF000996">
    <property type="entry name" value="PRK00105.1"/>
    <property type="match status" value="1"/>
</dbReference>
<dbReference type="PANTHER" id="PTHR43463">
    <property type="entry name" value="NICOTINATE-NUCLEOTIDE--DIMETHYLBENZIMIDAZOLE PHOSPHORIBOSYLTRANSFERASE"/>
    <property type="match status" value="1"/>
</dbReference>
<dbReference type="PANTHER" id="PTHR43463:SF1">
    <property type="entry name" value="NICOTINATE-NUCLEOTIDE--DIMETHYLBENZIMIDAZOLE PHOSPHORIBOSYLTRANSFERASE"/>
    <property type="match status" value="1"/>
</dbReference>
<dbReference type="Pfam" id="PF02277">
    <property type="entry name" value="DBI_PRT"/>
    <property type="match status" value="1"/>
</dbReference>
<dbReference type="SUPFAM" id="SSF52733">
    <property type="entry name" value="Nicotinate mononucleotide:5,6-dimethylbenzimidazole phosphoribosyltransferase (CobT)"/>
    <property type="match status" value="1"/>
</dbReference>
<organism>
    <name type="scientific">Parabacteroides distasonis (strain ATCC 8503 / DSM 20701 / CIP 104284 / JCM 5825 / NCTC 11152)</name>
    <dbReference type="NCBI Taxonomy" id="435591"/>
    <lineage>
        <taxon>Bacteria</taxon>
        <taxon>Pseudomonadati</taxon>
        <taxon>Bacteroidota</taxon>
        <taxon>Bacteroidia</taxon>
        <taxon>Bacteroidales</taxon>
        <taxon>Tannerellaceae</taxon>
        <taxon>Parabacteroides</taxon>
    </lineage>
</organism>
<keyword id="KW-0169">Cobalamin biosynthesis</keyword>
<keyword id="KW-0328">Glycosyltransferase</keyword>
<keyword id="KW-1185">Reference proteome</keyword>
<keyword id="KW-0808">Transferase</keyword>